<organism>
    <name type="scientific">Sus scrofa</name>
    <name type="common">Pig</name>
    <dbReference type="NCBI Taxonomy" id="9823"/>
    <lineage>
        <taxon>Eukaryota</taxon>
        <taxon>Metazoa</taxon>
        <taxon>Chordata</taxon>
        <taxon>Craniata</taxon>
        <taxon>Vertebrata</taxon>
        <taxon>Euteleostomi</taxon>
        <taxon>Mammalia</taxon>
        <taxon>Eutheria</taxon>
        <taxon>Laurasiatheria</taxon>
        <taxon>Artiodactyla</taxon>
        <taxon>Suina</taxon>
        <taxon>Suidae</taxon>
        <taxon>Sus</taxon>
    </lineage>
</organism>
<dbReference type="EMBL" id="AB000790">
    <property type="protein sequence ID" value="BAA19180.1"/>
    <property type="molecule type" value="mRNA"/>
</dbReference>
<dbReference type="EMBL" id="AB000791">
    <property type="protein sequence ID" value="BAA19181.1"/>
    <property type="molecule type" value="mRNA"/>
</dbReference>
<dbReference type="SMR" id="P79431"/>
<dbReference type="FunCoup" id="P79431">
    <property type="interactions" value="2"/>
</dbReference>
<dbReference type="InParanoid" id="P79431"/>
<dbReference type="Proteomes" id="UP000008227">
    <property type="component" value="Unplaced"/>
</dbReference>
<dbReference type="Proteomes" id="UP000314985">
    <property type="component" value="Unplaced"/>
</dbReference>
<dbReference type="Proteomes" id="UP000694570">
    <property type="component" value="Unplaced"/>
</dbReference>
<dbReference type="Proteomes" id="UP000694571">
    <property type="component" value="Unplaced"/>
</dbReference>
<dbReference type="Proteomes" id="UP000694720">
    <property type="component" value="Unplaced"/>
</dbReference>
<dbReference type="Proteomes" id="UP000694722">
    <property type="component" value="Unplaced"/>
</dbReference>
<dbReference type="Proteomes" id="UP000694723">
    <property type="component" value="Unplaced"/>
</dbReference>
<dbReference type="Proteomes" id="UP000694724">
    <property type="component" value="Unplaced"/>
</dbReference>
<dbReference type="Proteomes" id="UP000694725">
    <property type="component" value="Unplaced"/>
</dbReference>
<dbReference type="Proteomes" id="UP000694726">
    <property type="component" value="Unplaced"/>
</dbReference>
<dbReference type="Proteomes" id="UP000694727">
    <property type="component" value="Unplaced"/>
</dbReference>
<dbReference type="Proteomes" id="UP000694728">
    <property type="component" value="Unplaced"/>
</dbReference>
<dbReference type="GO" id="GO:0005737">
    <property type="term" value="C:cytoplasm"/>
    <property type="evidence" value="ECO:0000250"/>
    <property type="project" value="UniProtKB"/>
</dbReference>
<dbReference type="GO" id="GO:0005634">
    <property type="term" value="C:nucleus"/>
    <property type="evidence" value="ECO:0000250"/>
    <property type="project" value="UniProtKB"/>
</dbReference>
<dbReference type="GO" id="GO:0046872">
    <property type="term" value="F:metal ion binding"/>
    <property type="evidence" value="ECO:0000318"/>
    <property type="project" value="GO_Central"/>
</dbReference>
<dbReference type="GO" id="GO:0008270">
    <property type="term" value="F:zinc ion binding"/>
    <property type="evidence" value="ECO:0000250"/>
    <property type="project" value="UniProtKB"/>
</dbReference>
<dbReference type="GO" id="GO:0071276">
    <property type="term" value="P:cellular response to cadmium ion"/>
    <property type="evidence" value="ECO:0000318"/>
    <property type="project" value="GO_Central"/>
</dbReference>
<dbReference type="GO" id="GO:0071280">
    <property type="term" value="P:cellular response to copper ion"/>
    <property type="evidence" value="ECO:0000318"/>
    <property type="project" value="GO_Central"/>
</dbReference>
<dbReference type="GO" id="GO:0071294">
    <property type="term" value="P:cellular response to zinc ion"/>
    <property type="evidence" value="ECO:0000250"/>
    <property type="project" value="UniProtKB"/>
</dbReference>
<dbReference type="GO" id="GO:0010273">
    <property type="term" value="P:detoxification of copper ion"/>
    <property type="evidence" value="ECO:0000318"/>
    <property type="project" value="GO_Central"/>
</dbReference>
<dbReference type="GO" id="GO:0006882">
    <property type="term" value="P:intracellular zinc ion homeostasis"/>
    <property type="evidence" value="ECO:0000318"/>
    <property type="project" value="GO_Central"/>
</dbReference>
<dbReference type="GO" id="GO:0045926">
    <property type="term" value="P:negative regulation of growth"/>
    <property type="evidence" value="ECO:0000250"/>
    <property type="project" value="UniProtKB"/>
</dbReference>
<dbReference type="FunFam" id="4.10.10.10:FF:000001">
    <property type="entry name" value="Metallothionein"/>
    <property type="match status" value="1"/>
</dbReference>
<dbReference type="Gene3D" id="4.10.10.10">
    <property type="entry name" value="Metallothionein Isoform II"/>
    <property type="match status" value="1"/>
</dbReference>
<dbReference type="InterPro" id="IPR017854">
    <property type="entry name" value="Metalthion_dom_sf"/>
</dbReference>
<dbReference type="InterPro" id="IPR023587">
    <property type="entry name" value="Metalthion_dom_sf_vert"/>
</dbReference>
<dbReference type="InterPro" id="IPR000006">
    <property type="entry name" value="Metalthion_vert"/>
</dbReference>
<dbReference type="InterPro" id="IPR018064">
    <property type="entry name" value="Metalthion_vert_metal_BS"/>
</dbReference>
<dbReference type="PANTHER" id="PTHR23299">
    <property type="entry name" value="METALLOTHIONEIN"/>
    <property type="match status" value="1"/>
</dbReference>
<dbReference type="PANTHER" id="PTHR23299:SF22">
    <property type="entry name" value="METALLOTHIONEIN-1G"/>
    <property type="match status" value="1"/>
</dbReference>
<dbReference type="Pfam" id="PF00131">
    <property type="entry name" value="Metallothio"/>
    <property type="match status" value="1"/>
</dbReference>
<dbReference type="PRINTS" id="PR00860">
    <property type="entry name" value="MTVERTEBRATE"/>
</dbReference>
<dbReference type="SUPFAM" id="SSF57868">
    <property type="entry name" value="Metallothionein"/>
    <property type="match status" value="1"/>
</dbReference>
<dbReference type="PROSITE" id="PS00203">
    <property type="entry name" value="METALLOTHIONEIN_VRT"/>
    <property type="match status" value="1"/>
</dbReference>
<name>MT1E_PIG</name>
<keyword id="KW-0007">Acetylation</keyword>
<keyword id="KW-0479">Metal-binding</keyword>
<keyword id="KW-0480">Metal-thiolate cluster</keyword>
<keyword id="KW-1185">Reference proteome</keyword>
<sequence length="61" mass="5969">MDPNCSCPTGGSCSCAGSCTCKACRCTSCKKSCCSCCPVGCAKCAQGCICKGASDKCSCCA</sequence>
<proteinExistence type="inferred from homology"/>
<reference key="1">
    <citation type="journal article" date="1998" name="Gene">
        <title>Multiple isoforms of metallothionein are expressed in the porcine liver.</title>
        <authorList>
            <person name="Huang M.-C."/>
            <person name="Pan P.K."/>
            <person name="Zheng T.F."/>
            <person name="Chen N.C."/>
            <person name="Peng J.Y."/>
            <person name="Huang P.C."/>
        </authorList>
    </citation>
    <scope>NUCLEOTIDE SEQUENCE [MRNA]</scope>
    <source>
        <tissue>Liver</tissue>
    </source>
</reference>
<feature type="chain" id="PRO_0000197211" description="Metallothionein-1E">
    <location>
        <begin position="1"/>
        <end position="61"/>
    </location>
</feature>
<feature type="region of interest" description="Beta">
    <location>
        <begin position="1"/>
        <end position="29"/>
    </location>
</feature>
<feature type="region of interest" description="Alpha">
    <location>
        <begin position="30"/>
        <end position="61"/>
    </location>
</feature>
<feature type="binding site" evidence="2">
    <location>
        <position position="5"/>
    </location>
    <ligand>
        <name>a divalent metal cation</name>
        <dbReference type="ChEBI" id="CHEBI:60240"/>
        <label>1</label>
        <note>in cluster B</note>
    </ligand>
</feature>
<feature type="binding site" evidence="2">
    <location>
        <position position="7"/>
    </location>
    <ligand>
        <name>a divalent metal cation</name>
        <dbReference type="ChEBI" id="CHEBI:60240"/>
        <label>1</label>
        <note>in cluster B</note>
    </ligand>
</feature>
<feature type="binding site" evidence="2">
    <location>
        <position position="7"/>
    </location>
    <ligand>
        <name>a divalent metal cation</name>
        <dbReference type="ChEBI" id="CHEBI:60240"/>
        <label>2</label>
        <note>in cluster B</note>
    </ligand>
</feature>
<feature type="binding site" evidence="2">
    <location>
        <position position="13"/>
    </location>
    <ligand>
        <name>a divalent metal cation</name>
        <dbReference type="ChEBI" id="CHEBI:60240"/>
        <label>2</label>
        <note>in cluster B</note>
    </ligand>
</feature>
<feature type="binding site" evidence="2">
    <location>
        <position position="15"/>
    </location>
    <ligand>
        <name>a divalent metal cation</name>
        <dbReference type="ChEBI" id="CHEBI:60240"/>
        <label>2</label>
        <note>in cluster B</note>
    </ligand>
</feature>
<feature type="binding site" evidence="2">
    <location>
        <position position="15"/>
    </location>
    <ligand>
        <name>a divalent metal cation</name>
        <dbReference type="ChEBI" id="CHEBI:60240"/>
        <label>3</label>
        <note>in cluster B</note>
    </ligand>
</feature>
<feature type="binding site" evidence="2">
    <location>
        <position position="19"/>
    </location>
    <ligand>
        <name>a divalent metal cation</name>
        <dbReference type="ChEBI" id="CHEBI:60240"/>
        <label>3</label>
        <note>in cluster B</note>
    </ligand>
</feature>
<feature type="binding site" evidence="2">
    <location>
        <position position="21"/>
    </location>
    <ligand>
        <name>a divalent metal cation</name>
        <dbReference type="ChEBI" id="CHEBI:60240"/>
        <label>1</label>
        <note>in cluster B</note>
    </ligand>
</feature>
<feature type="binding site" evidence="2">
    <location>
        <position position="24"/>
    </location>
    <ligand>
        <name>a divalent metal cation</name>
        <dbReference type="ChEBI" id="CHEBI:60240"/>
        <label>1</label>
        <note>in cluster B</note>
    </ligand>
</feature>
<feature type="binding site" evidence="2">
    <location>
        <position position="24"/>
    </location>
    <ligand>
        <name>a divalent metal cation</name>
        <dbReference type="ChEBI" id="CHEBI:60240"/>
        <label>3</label>
        <note>in cluster B</note>
    </ligand>
</feature>
<feature type="binding site" evidence="2">
    <location>
        <position position="26"/>
    </location>
    <ligand>
        <name>a divalent metal cation</name>
        <dbReference type="ChEBI" id="CHEBI:60240"/>
        <label>2</label>
        <note>in cluster B</note>
    </ligand>
</feature>
<feature type="binding site" evidence="2">
    <location>
        <position position="29"/>
    </location>
    <ligand>
        <name>a divalent metal cation</name>
        <dbReference type="ChEBI" id="CHEBI:60240"/>
        <label>3</label>
        <note>in cluster B</note>
    </ligand>
</feature>
<feature type="binding site" evidence="2">
    <location>
        <position position="33"/>
    </location>
    <ligand>
        <name>a divalent metal cation</name>
        <dbReference type="ChEBI" id="CHEBI:60240"/>
        <label>4</label>
        <note>in cluster A</note>
    </ligand>
</feature>
<feature type="binding site" evidence="2">
    <location>
        <position position="34"/>
    </location>
    <ligand>
        <name>a divalent metal cation</name>
        <dbReference type="ChEBI" id="CHEBI:60240"/>
        <label>4</label>
        <note>in cluster A</note>
    </ligand>
</feature>
<feature type="binding site" evidence="2">
    <location>
        <position position="34"/>
    </location>
    <ligand>
        <name>a divalent metal cation</name>
        <dbReference type="ChEBI" id="CHEBI:60240"/>
        <label>5</label>
        <note>in cluster A</note>
    </ligand>
</feature>
<feature type="binding site" evidence="2">
    <location>
        <position position="36"/>
    </location>
    <ligand>
        <name>a divalent metal cation</name>
        <dbReference type="ChEBI" id="CHEBI:60240"/>
        <label>5</label>
        <note>in cluster A</note>
    </ligand>
</feature>
<feature type="binding site" evidence="2">
    <location>
        <position position="37"/>
    </location>
    <ligand>
        <name>a divalent metal cation</name>
        <dbReference type="ChEBI" id="CHEBI:60240"/>
        <label>5</label>
        <note>in cluster A</note>
    </ligand>
</feature>
<feature type="binding site" evidence="2">
    <location>
        <position position="37"/>
    </location>
    <ligand>
        <name>a divalent metal cation</name>
        <dbReference type="ChEBI" id="CHEBI:60240"/>
        <label>6</label>
        <note>in cluster A</note>
    </ligand>
</feature>
<feature type="binding site" evidence="2">
    <location>
        <position position="41"/>
    </location>
    <ligand>
        <name>a divalent metal cation</name>
        <dbReference type="ChEBI" id="CHEBI:60240"/>
        <label>6</label>
        <note>in cluster A</note>
    </ligand>
</feature>
<feature type="binding site" evidence="2">
    <location>
        <position position="44"/>
    </location>
    <ligand>
        <name>a divalent metal cation</name>
        <dbReference type="ChEBI" id="CHEBI:60240"/>
        <label>4</label>
        <note>in cluster A</note>
    </ligand>
</feature>
<feature type="binding site" evidence="2">
    <location>
        <position position="44"/>
    </location>
    <ligand>
        <name>a divalent metal cation</name>
        <dbReference type="ChEBI" id="CHEBI:60240"/>
        <label>6</label>
        <note>in cluster A</note>
    </ligand>
</feature>
<feature type="binding site" evidence="2">
    <location>
        <position position="48"/>
    </location>
    <ligand>
        <name>a divalent metal cation</name>
        <dbReference type="ChEBI" id="CHEBI:60240"/>
        <label>4</label>
        <note>in cluster A</note>
    </ligand>
</feature>
<feature type="binding site" evidence="2">
    <location>
        <position position="50"/>
    </location>
    <ligand>
        <name>a divalent metal cation</name>
        <dbReference type="ChEBI" id="CHEBI:60240"/>
        <label>5</label>
        <note>in cluster A</note>
    </ligand>
</feature>
<feature type="binding site" evidence="2">
    <location>
        <position position="50"/>
    </location>
    <ligand>
        <name>a divalent metal cation</name>
        <dbReference type="ChEBI" id="CHEBI:60240"/>
        <label>7</label>
        <note>in cluster A</note>
    </ligand>
</feature>
<feature type="binding site" evidence="2">
    <location>
        <position position="57"/>
    </location>
    <ligand>
        <name>a divalent metal cation</name>
        <dbReference type="ChEBI" id="CHEBI:60240"/>
        <label>7</label>
        <note>in cluster A</note>
    </ligand>
</feature>
<feature type="binding site" evidence="2">
    <location>
        <position position="59"/>
    </location>
    <ligand>
        <name>a divalent metal cation</name>
        <dbReference type="ChEBI" id="CHEBI:60240"/>
        <label>7</label>
        <note>in cluster A</note>
    </ligand>
</feature>
<feature type="binding site" evidence="2">
    <location>
        <position position="60"/>
    </location>
    <ligand>
        <name>a divalent metal cation</name>
        <dbReference type="ChEBI" id="CHEBI:60240"/>
        <label>6</label>
        <note>in cluster A</note>
    </ligand>
</feature>
<feature type="binding site" evidence="2">
    <location>
        <position position="60"/>
    </location>
    <ligand>
        <name>a divalent metal cation</name>
        <dbReference type="ChEBI" id="CHEBI:60240"/>
        <label>7</label>
        <note>in cluster A</note>
    </ligand>
</feature>
<feature type="modified residue" description="N-acetylmethionine" evidence="3">
    <location>
        <position position="1"/>
    </location>
</feature>
<protein>
    <recommendedName>
        <fullName>Metallothionein-1E</fullName>
        <shortName>MT-1E</shortName>
    </recommendedName>
    <alternativeName>
        <fullName>Metallothionein-IE</fullName>
        <shortName>MT-IE</shortName>
    </alternativeName>
</protein>
<accession>P79431</accession>
<evidence type="ECO:0000250" key="1"/>
<evidence type="ECO:0000250" key="2">
    <source>
        <dbReference type="UniProtKB" id="P02795"/>
    </source>
</evidence>
<evidence type="ECO:0000250" key="3">
    <source>
        <dbReference type="UniProtKB" id="P04732"/>
    </source>
</evidence>
<evidence type="ECO:0000305" key="4"/>
<gene>
    <name type="primary">MT1E</name>
</gene>
<comment type="function">
    <text>Metallothioneins have a high content of cysteine residues that bind various heavy metals; these proteins are transcriptionally regulated by both heavy metals and glucocorticoids.</text>
</comment>
<comment type="subunit">
    <text evidence="1">Monomer.</text>
</comment>
<comment type="domain">
    <text>Class I metallothioneins contain 2 metal-binding domains: four divalent ions are chelated within cluster A of the alpha domain and are coordinated via cysteinyl thiolate bridges to 11 cysteine ligands. Cluster B, the corresponding region within the beta domain, can ligate three divalent ions to 9 cysteines.</text>
</comment>
<comment type="similarity">
    <text evidence="4">Belongs to the metallothionein superfamily. Type 1 family.</text>
</comment>